<name>PYRB_MARMM</name>
<comment type="function">
    <text evidence="1">Catalyzes the condensation of carbamoyl phosphate and aspartate to form carbamoyl aspartate and inorganic phosphate, the committed step in the de novo pyrimidine nucleotide biosynthesis pathway.</text>
</comment>
<comment type="catalytic activity">
    <reaction evidence="1">
        <text>carbamoyl phosphate + L-aspartate = N-carbamoyl-L-aspartate + phosphate + H(+)</text>
        <dbReference type="Rhea" id="RHEA:20013"/>
        <dbReference type="ChEBI" id="CHEBI:15378"/>
        <dbReference type="ChEBI" id="CHEBI:29991"/>
        <dbReference type="ChEBI" id="CHEBI:32814"/>
        <dbReference type="ChEBI" id="CHEBI:43474"/>
        <dbReference type="ChEBI" id="CHEBI:58228"/>
        <dbReference type="EC" id="2.1.3.2"/>
    </reaction>
</comment>
<comment type="pathway">
    <text evidence="1">Pyrimidine metabolism; UMP biosynthesis via de novo pathway; (S)-dihydroorotate from bicarbonate: step 2/3.</text>
</comment>
<comment type="subunit">
    <text evidence="1">Heterododecamer (2C3:3R2) of six catalytic PyrB chains organized as two trimers (C3), and six regulatory PyrI chains organized as three dimers (R2).</text>
</comment>
<comment type="similarity">
    <text evidence="1">Belongs to the aspartate/ornithine carbamoyltransferase superfamily. ATCase family.</text>
</comment>
<keyword id="KW-0665">Pyrimidine biosynthesis</keyword>
<keyword id="KW-1185">Reference proteome</keyword>
<keyword id="KW-0808">Transferase</keyword>
<organism>
    <name type="scientific">Maricaulis maris (strain MCS10)</name>
    <name type="common">Caulobacter maris</name>
    <dbReference type="NCBI Taxonomy" id="394221"/>
    <lineage>
        <taxon>Bacteria</taxon>
        <taxon>Pseudomonadati</taxon>
        <taxon>Pseudomonadota</taxon>
        <taxon>Alphaproteobacteria</taxon>
        <taxon>Maricaulales</taxon>
        <taxon>Maricaulaceae</taxon>
        <taxon>Maricaulis</taxon>
    </lineage>
</organism>
<sequence>MSRAEFSYDFPHRHLLSVADLNPVDIQIIFERAAHHLATNRTPDKRSDVLRGLTVLNLFFEASTRTQGSFEMAGKRLGADVVNFAVAHSSASKGESLSDTARTLAAMKPDIMVVRHSATGAPQFLADHTGLAVVNAGDGMHEHPTQALLDSFTLSQHWGSVGGRRILIVGDILHSRVARSNIGLLNILGAEIRLCAPPTLLPSDVDQWGCDVFHDLDEALKGCDAVMALRQQRERMSGGFVPSEREFFHLFGLTHERLEVASPDVLVMHPGPMNRGVEIHTKLADDPERSVILEQVESGVAVRMAILELIGANIRKEASA</sequence>
<gene>
    <name evidence="1" type="primary">pyrB</name>
    <name type="ordered locus">Mmar10_1713</name>
</gene>
<evidence type="ECO:0000255" key="1">
    <source>
        <dbReference type="HAMAP-Rule" id="MF_00001"/>
    </source>
</evidence>
<reference key="1">
    <citation type="submission" date="2006-08" db="EMBL/GenBank/DDBJ databases">
        <title>Complete sequence of Maricaulis maris MCS10.</title>
        <authorList>
            <consortium name="US DOE Joint Genome Institute"/>
            <person name="Copeland A."/>
            <person name="Lucas S."/>
            <person name="Lapidus A."/>
            <person name="Barry K."/>
            <person name="Detter J.C."/>
            <person name="Glavina del Rio T."/>
            <person name="Hammon N."/>
            <person name="Israni S."/>
            <person name="Dalin E."/>
            <person name="Tice H."/>
            <person name="Pitluck S."/>
            <person name="Saunders E."/>
            <person name="Brettin T."/>
            <person name="Bruce D."/>
            <person name="Han C."/>
            <person name="Tapia R."/>
            <person name="Gilna P."/>
            <person name="Schmutz J."/>
            <person name="Larimer F."/>
            <person name="Land M."/>
            <person name="Hauser L."/>
            <person name="Kyrpides N."/>
            <person name="Mikhailova N."/>
            <person name="Viollier P."/>
            <person name="Stephens C."/>
            <person name="Richardson P."/>
        </authorList>
    </citation>
    <scope>NUCLEOTIDE SEQUENCE [LARGE SCALE GENOMIC DNA]</scope>
    <source>
        <strain>MCS10</strain>
    </source>
</reference>
<feature type="chain" id="PRO_0000321117" description="Aspartate carbamoyltransferase catalytic subunit">
    <location>
        <begin position="1"/>
        <end position="320"/>
    </location>
</feature>
<feature type="binding site" evidence="1">
    <location>
        <position position="65"/>
    </location>
    <ligand>
        <name>carbamoyl phosphate</name>
        <dbReference type="ChEBI" id="CHEBI:58228"/>
    </ligand>
</feature>
<feature type="binding site" evidence="1">
    <location>
        <position position="66"/>
    </location>
    <ligand>
        <name>carbamoyl phosphate</name>
        <dbReference type="ChEBI" id="CHEBI:58228"/>
    </ligand>
</feature>
<feature type="binding site" evidence="1">
    <location>
        <position position="93"/>
    </location>
    <ligand>
        <name>L-aspartate</name>
        <dbReference type="ChEBI" id="CHEBI:29991"/>
    </ligand>
</feature>
<feature type="binding site" evidence="1">
    <location>
        <position position="115"/>
    </location>
    <ligand>
        <name>carbamoyl phosphate</name>
        <dbReference type="ChEBI" id="CHEBI:58228"/>
    </ligand>
</feature>
<feature type="binding site" evidence="1">
    <location>
        <position position="143"/>
    </location>
    <ligand>
        <name>carbamoyl phosphate</name>
        <dbReference type="ChEBI" id="CHEBI:58228"/>
    </ligand>
</feature>
<feature type="binding site" evidence="1">
    <location>
        <position position="146"/>
    </location>
    <ligand>
        <name>carbamoyl phosphate</name>
        <dbReference type="ChEBI" id="CHEBI:58228"/>
    </ligand>
</feature>
<feature type="binding site" evidence="1">
    <location>
        <position position="176"/>
    </location>
    <ligand>
        <name>L-aspartate</name>
        <dbReference type="ChEBI" id="CHEBI:29991"/>
    </ligand>
</feature>
<feature type="binding site" evidence="1">
    <location>
        <position position="230"/>
    </location>
    <ligand>
        <name>L-aspartate</name>
        <dbReference type="ChEBI" id="CHEBI:29991"/>
    </ligand>
</feature>
<feature type="binding site" evidence="1">
    <location>
        <position position="271"/>
    </location>
    <ligand>
        <name>carbamoyl phosphate</name>
        <dbReference type="ChEBI" id="CHEBI:58228"/>
    </ligand>
</feature>
<feature type="binding site" evidence="1">
    <location>
        <position position="272"/>
    </location>
    <ligand>
        <name>carbamoyl phosphate</name>
        <dbReference type="ChEBI" id="CHEBI:58228"/>
    </ligand>
</feature>
<protein>
    <recommendedName>
        <fullName evidence="1">Aspartate carbamoyltransferase catalytic subunit</fullName>
        <ecNumber evidence="1">2.1.3.2</ecNumber>
    </recommendedName>
    <alternativeName>
        <fullName evidence="1">Aspartate transcarbamylase</fullName>
        <shortName evidence="1">ATCase</shortName>
    </alternativeName>
</protein>
<proteinExistence type="inferred from homology"/>
<accession>Q0ANY2</accession>
<dbReference type="EC" id="2.1.3.2" evidence="1"/>
<dbReference type="EMBL" id="CP000449">
    <property type="protein sequence ID" value="ABI66005.1"/>
    <property type="molecule type" value="Genomic_DNA"/>
</dbReference>
<dbReference type="RefSeq" id="WP_011643651.1">
    <property type="nucleotide sequence ID" value="NC_008347.1"/>
</dbReference>
<dbReference type="SMR" id="Q0ANY2"/>
<dbReference type="STRING" id="394221.Mmar10_1713"/>
<dbReference type="KEGG" id="mmr:Mmar10_1713"/>
<dbReference type="eggNOG" id="COG0540">
    <property type="taxonomic scope" value="Bacteria"/>
</dbReference>
<dbReference type="HOGENOM" id="CLU_043846_2_0_5"/>
<dbReference type="OrthoDB" id="9774690at2"/>
<dbReference type="UniPathway" id="UPA00070">
    <property type="reaction ID" value="UER00116"/>
</dbReference>
<dbReference type="Proteomes" id="UP000001964">
    <property type="component" value="Chromosome"/>
</dbReference>
<dbReference type="GO" id="GO:0005829">
    <property type="term" value="C:cytosol"/>
    <property type="evidence" value="ECO:0007669"/>
    <property type="project" value="TreeGrafter"/>
</dbReference>
<dbReference type="GO" id="GO:0016597">
    <property type="term" value="F:amino acid binding"/>
    <property type="evidence" value="ECO:0007669"/>
    <property type="project" value="InterPro"/>
</dbReference>
<dbReference type="GO" id="GO:0004070">
    <property type="term" value="F:aspartate carbamoyltransferase activity"/>
    <property type="evidence" value="ECO:0007669"/>
    <property type="project" value="UniProtKB-UniRule"/>
</dbReference>
<dbReference type="GO" id="GO:0006207">
    <property type="term" value="P:'de novo' pyrimidine nucleobase biosynthetic process"/>
    <property type="evidence" value="ECO:0007669"/>
    <property type="project" value="InterPro"/>
</dbReference>
<dbReference type="GO" id="GO:0044205">
    <property type="term" value="P:'de novo' UMP biosynthetic process"/>
    <property type="evidence" value="ECO:0007669"/>
    <property type="project" value="UniProtKB-UniRule"/>
</dbReference>
<dbReference type="GO" id="GO:0006520">
    <property type="term" value="P:amino acid metabolic process"/>
    <property type="evidence" value="ECO:0007669"/>
    <property type="project" value="InterPro"/>
</dbReference>
<dbReference type="FunFam" id="3.40.50.1370:FF:000007">
    <property type="entry name" value="Aspartate carbamoyltransferase"/>
    <property type="match status" value="1"/>
</dbReference>
<dbReference type="Gene3D" id="3.40.50.1370">
    <property type="entry name" value="Aspartate/ornithine carbamoyltransferase"/>
    <property type="match status" value="2"/>
</dbReference>
<dbReference type="HAMAP" id="MF_00001">
    <property type="entry name" value="Asp_carb_tr"/>
    <property type="match status" value="1"/>
</dbReference>
<dbReference type="InterPro" id="IPR006132">
    <property type="entry name" value="Asp/Orn_carbamoyltranf_P-bd"/>
</dbReference>
<dbReference type="InterPro" id="IPR006130">
    <property type="entry name" value="Asp/Orn_carbamoylTrfase"/>
</dbReference>
<dbReference type="InterPro" id="IPR036901">
    <property type="entry name" value="Asp/Orn_carbamoylTrfase_sf"/>
</dbReference>
<dbReference type="InterPro" id="IPR002082">
    <property type="entry name" value="Asp_carbamoyltransf"/>
</dbReference>
<dbReference type="InterPro" id="IPR006131">
    <property type="entry name" value="Asp_carbamoyltransf_Asp/Orn-bd"/>
</dbReference>
<dbReference type="NCBIfam" id="TIGR00670">
    <property type="entry name" value="asp_carb_tr"/>
    <property type="match status" value="1"/>
</dbReference>
<dbReference type="NCBIfam" id="NF002032">
    <property type="entry name" value="PRK00856.1"/>
    <property type="match status" value="1"/>
</dbReference>
<dbReference type="PANTHER" id="PTHR45753:SF6">
    <property type="entry name" value="ASPARTATE CARBAMOYLTRANSFERASE"/>
    <property type="match status" value="1"/>
</dbReference>
<dbReference type="PANTHER" id="PTHR45753">
    <property type="entry name" value="ORNITHINE CARBAMOYLTRANSFERASE, MITOCHONDRIAL"/>
    <property type="match status" value="1"/>
</dbReference>
<dbReference type="Pfam" id="PF00185">
    <property type="entry name" value="OTCace"/>
    <property type="match status" value="1"/>
</dbReference>
<dbReference type="Pfam" id="PF02729">
    <property type="entry name" value="OTCace_N"/>
    <property type="match status" value="1"/>
</dbReference>
<dbReference type="PRINTS" id="PR00100">
    <property type="entry name" value="AOTCASE"/>
</dbReference>
<dbReference type="PRINTS" id="PR00101">
    <property type="entry name" value="ATCASE"/>
</dbReference>
<dbReference type="SUPFAM" id="SSF53671">
    <property type="entry name" value="Aspartate/ornithine carbamoyltransferase"/>
    <property type="match status" value="1"/>
</dbReference>
<dbReference type="PROSITE" id="PS00097">
    <property type="entry name" value="CARBAMOYLTRANSFERASE"/>
    <property type="match status" value="1"/>
</dbReference>